<feature type="chain" id="PRO_1000018058" description="Arginine--tRNA ligase">
    <location>
        <begin position="1"/>
        <end position="574"/>
    </location>
</feature>
<feature type="short sequence motif" description="'HIGH' region">
    <location>
        <begin position="124"/>
        <end position="134"/>
    </location>
</feature>
<name>SYR_META3</name>
<reference key="1">
    <citation type="submission" date="2007-06" db="EMBL/GenBank/DDBJ databases">
        <title>Complete sequence of Methanococcus aeolicus Nankai-3.</title>
        <authorList>
            <consortium name="US DOE Joint Genome Institute"/>
            <person name="Copeland A."/>
            <person name="Lucas S."/>
            <person name="Lapidus A."/>
            <person name="Barry K."/>
            <person name="Glavina del Rio T."/>
            <person name="Dalin E."/>
            <person name="Tice H."/>
            <person name="Pitluck S."/>
            <person name="Chain P."/>
            <person name="Malfatti S."/>
            <person name="Shin M."/>
            <person name="Vergez L."/>
            <person name="Schmutz J."/>
            <person name="Larimer F."/>
            <person name="Land M."/>
            <person name="Hauser L."/>
            <person name="Kyrpides N."/>
            <person name="Lykidis A."/>
            <person name="Sieprawska-Lupa M."/>
            <person name="Whitman W.B."/>
            <person name="Richardson P."/>
        </authorList>
    </citation>
    <scope>NUCLEOTIDE SEQUENCE [LARGE SCALE GENOMIC DNA]</scope>
    <source>
        <strain>ATCC BAA-1280 / DSM 17508 / OCM 812 / Nankai-3</strain>
    </source>
</reference>
<proteinExistence type="inferred from homology"/>
<accession>A6UW07</accession>
<protein>
    <recommendedName>
        <fullName evidence="1">Arginine--tRNA ligase</fullName>
        <ecNumber evidence="1">6.1.1.19</ecNumber>
    </recommendedName>
    <alternativeName>
        <fullName evidence="1">Arginyl-tRNA synthetase</fullName>
        <shortName evidence="1">ArgRS</shortName>
    </alternativeName>
</protein>
<evidence type="ECO:0000255" key="1">
    <source>
        <dbReference type="HAMAP-Rule" id="MF_00123"/>
    </source>
</evidence>
<comment type="catalytic activity">
    <reaction evidence="1">
        <text>tRNA(Arg) + L-arginine + ATP = L-arginyl-tRNA(Arg) + AMP + diphosphate</text>
        <dbReference type="Rhea" id="RHEA:20301"/>
        <dbReference type="Rhea" id="RHEA-COMP:9658"/>
        <dbReference type="Rhea" id="RHEA-COMP:9673"/>
        <dbReference type="ChEBI" id="CHEBI:30616"/>
        <dbReference type="ChEBI" id="CHEBI:32682"/>
        <dbReference type="ChEBI" id="CHEBI:33019"/>
        <dbReference type="ChEBI" id="CHEBI:78442"/>
        <dbReference type="ChEBI" id="CHEBI:78513"/>
        <dbReference type="ChEBI" id="CHEBI:456215"/>
        <dbReference type="EC" id="6.1.1.19"/>
    </reaction>
</comment>
<comment type="subcellular location">
    <subcellularLocation>
        <location evidence="1">Cytoplasm</location>
    </subcellularLocation>
</comment>
<comment type="similarity">
    <text evidence="1">Belongs to the class-I aminoacyl-tRNA synthetase family.</text>
</comment>
<keyword id="KW-0030">Aminoacyl-tRNA synthetase</keyword>
<keyword id="KW-0067">ATP-binding</keyword>
<keyword id="KW-0963">Cytoplasm</keyword>
<keyword id="KW-0436">Ligase</keyword>
<keyword id="KW-0547">Nucleotide-binding</keyword>
<keyword id="KW-0648">Protein biosynthesis</keyword>
<gene>
    <name evidence="1" type="primary">argS</name>
    <name type="ordered locus">Maeo_1102</name>
</gene>
<dbReference type="EC" id="6.1.1.19" evidence="1"/>
<dbReference type="EMBL" id="CP000743">
    <property type="protein sequence ID" value="ABR56679.1"/>
    <property type="molecule type" value="Genomic_DNA"/>
</dbReference>
<dbReference type="RefSeq" id="WP_011973811.1">
    <property type="nucleotide sequence ID" value="NC_009635.1"/>
</dbReference>
<dbReference type="SMR" id="A6UW07"/>
<dbReference type="STRING" id="419665.Maeo_1102"/>
<dbReference type="GeneID" id="5327152"/>
<dbReference type="GeneID" id="75306206"/>
<dbReference type="KEGG" id="mae:Maeo_1102"/>
<dbReference type="eggNOG" id="arCOG00487">
    <property type="taxonomic scope" value="Archaea"/>
</dbReference>
<dbReference type="HOGENOM" id="CLU_006406_6_1_2"/>
<dbReference type="OrthoDB" id="372102at2157"/>
<dbReference type="Proteomes" id="UP000001106">
    <property type="component" value="Chromosome"/>
</dbReference>
<dbReference type="GO" id="GO:0005737">
    <property type="term" value="C:cytoplasm"/>
    <property type="evidence" value="ECO:0007669"/>
    <property type="project" value="UniProtKB-SubCell"/>
</dbReference>
<dbReference type="GO" id="GO:0004814">
    <property type="term" value="F:arginine-tRNA ligase activity"/>
    <property type="evidence" value="ECO:0007669"/>
    <property type="project" value="UniProtKB-UniRule"/>
</dbReference>
<dbReference type="GO" id="GO:0005524">
    <property type="term" value="F:ATP binding"/>
    <property type="evidence" value="ECO:0007669"/>
    <property type="project" value="UniProtKB-UniRule"/>
</dbReference>
<dbReference type="GO" id="GO:0006420">
    <property type="term" value="P:arginyl-tRNA aminoacylation"/>
    <property type="evidence" value="ECO:0007669"/>
    <property type="project" value="UniProtKB-UniRule"/>
</dbReference>
<dbReference type="CDD" id="cd00671">
    <property type="entry name" value="ArgRS_core"/>
    <property type="match status" value="1"/>
</dbReference>
<dbReference type="Gene3D" id="3.30.1360.70">
    <property type="entry name" value="Arginyl tRNA synthetase N-terminal domain"/>
    <property type="match status" value="1"/>
</dbReference>
<dbReference type="Gene3D" id="3.40.50.620">
    <property type="entry name" value="HUPs"/>
    <property type="match status" value="1"/>
</dbReference>
<dbReference type="Gene3D" id="1.10.730.10">
    <property type="entry name" value="Isoleucyl-tRNA Synthetase, Domain 1"/>
    <property type="match status" value="1"/>
</dbReference>
<dbReference type="HAMAP" id="MF_00123">
    <property type="entry name" value="Arg_tRNA_synth"/>
    <property type="match status" value="1"/>
</dbReference>
<dbReference type="InterPro" id="IPR001412">
    <property type="entry name" value="aa-tRNA-synth_I_CS"/>
</dbReference>
<dbReference type="InterPro" id="IPR001278">
    <property type="entry name" value="Arg-tRNA-ligase"/>
</dbReference>
<dbReference type="InterPro" id="IPR005148">
    <property type="entry name" value="Arg-tRNA-synth_N"/>
</dbReference>
<dbReference type="InterPro" id="IPR036695">
    <property type="entry name" value="Arg-tRNA-synth_N_sf"/>
</dbReference>
<dbReference type="InterPro" id="IPR035684">
    <property type="entry name" value="ArgRS_core"/>
</dbReference>
<dbReference type="InterPro" id="IPR008909">
    <property type="entry name" value="DALR_anticod-bd"/>
</dbReference>
<dbReference type="InterPro" id="IPR014729">
    <property type="entry name" value="Rossmann-like_a/b/a_fold"/>
</dbReference>
<dbReference type="InterPro" id="IPR009080">
    <property type="entry name" value="tRNAsynth_Ia_anticodon-bd"/>
</dbReference>
<dbReference type="NCBIfam" id="TIGR00456">
    <property type="entry name" value="argS"/>
    <property type="match status" value="1"/>
</dbReference>
<dbReference type="PANTHER" id="PTHR11956:SF5">
    <property type="entry name" value="ARGININE--TRNA LIGASE, CYTOPLASMIC"/>
    <property type="match status" value="1"/>
</dbReference>
<dbReference type="PANTHER" id="PTHR11956">
    <property type="entry name" value="ARGINYL-TRNA SYNTHETASE"/>
    <property type="match status" value="1"/>
</dbReference>
<dbReference type="Pfam" id="PF03485">
    <property type="entry name" value="Arg_tRNA_synt_N"/>
    <property type="match status" value="1"/>
</dbReference>
<dbReference type="Pfam" id="PF05746">
    <property type="entry name" value="DALR_1"/>
    <property type="match status" value="1"/>
</dbReference>
<dbReference type="Pfam" id="PF00750">
    <property type="entry name" value="tRNA-synt_1d"/>
    <property type="match status" value="1"/>
</dbReference>
<dbReference type="PRINTS" id="PR01038">
    <property type="entry name" value="TRNASYNTHARG"/>
</dbReference>
<dbReference type="SMART" id="SM01016">
    <property type="entry name" value="Arg_tRNA_synt_N"/>
    <property type="match status" value="1"/>
</dbReference>
<dbReference type="SMART" id="SM00836">
    <property type="entry name" value="DALR_1"/>
    <property type="match status" value="1"/>
</dbReference>
<dbReference type="SUPFAM" id="SSF47323">
    <property type="entry name" value="Anticodon-binding domain of a subclass of class I aminoacyl-tRNA synthetases"/>
    <property type="match status" value="1"/>
</dbReference>
<dbReference type="SUPFAM" id="SSF55190">
    <property type="entry name" value="Arginyl-tRNA synthetase (ArgRS), N-terminal 'additional' domain"/>
    <property type="match status" value="1"/>
</dbReference>
<dbReference type="SUPFAM" id="SSF52374">
    <property type="entry name" value="Nucleotidylyl transferase"/>
    <property type="match status" value="1"/>
</dbReference>
<dbReference type="PROSITE" id="PS00178">
    <property type="entry name" value="AA_TRNA_LIGASE_I"/>
    <property type="match status" value="1"/>
</dbReference>
<sequence length="574" mass="65551">MEQNITNILIKKIEELTETIYDETIRLEEPPSISLGDYSTNISFKLAKLLKKSPMVIAEELTNLLISENIEGIKEIKAVNGYINFFIDYNLYSKSGIAKISSEKDKFGQGAPKNKKVIIEHTSANPNGPLHIGHSRNAIVGDSLKRIVEFAGYVVEAQYYVNDMGRQEAIVVYGLDKFELNEQQKPDHAIGEVYFKANQLLNENPEQEEEILKLMKKYEEASEKGEENELTNKFNYAVNYALSGFKETLNNLNIHHDKFVWESSYVKNGMVQKVIQTLKDTGKVEKDEVYRLDLSEFGIDKKLVLARLNGTSLYSTRDIAYHIDKMKNCDIGINILGADHKLTAEMVNASLKLLGYNTPEVVFYEFISLPEGSMSTRRGTFISIDELYEEAKNRAVKEIKKRNETTEEEEINNIAHKIAVGAVRYNIVRISPDKAMVFRWDDALDFEKVGAPVIQYAHARCCRILEKENTNENKPIDATELFEYDLNEHEKLLIKILLKFPKIVEKSADAKKPQIMATYALDVAQTFNRYYANCPIFKEENKNIVYSRLELVKCTKTIIENALNLLGIECPGKM</sequence>
<organism>
    <name type="scientific">Methanococcus aeolicus (strain ATCC BAA-1280 / DSM 17508 / OCM 812 / Nankai-3)</name>
    <dbReference type="NCBI Taxonomy" id="419665"/>
    <lineage>
        <taxon>Archaea</taxon>
        <taxon>Methanobacteriati</taxon>
        <taxon>Methanobacteriota</taxon>
        <taxon>Methanomada group</taxon>
        <taxon>Methanococci</taxon>
        <taxon>Methanococcales</taxon>
        <taxon>Methanococcaceae</taxon>
        <taxon>Methanococcus</taxon>
    </lineage>
</organism>